<keyword id="KW-0030">Aminoacyl-tRNA synthetase</keyword>
<keyword id="KW-0067">ATP-binding</keyword>
<keyword id="KW-0963">Cytoplasm</keyword>
<keyword id="KW-0436">Ligase</keyword>
<keyword id="KW-0460">Magnesium</keyword>
<keyword id="KW-0479">Metal-binding</keyword>
<keyword id="KW-0547">Nucleotide-binding</keyword>
<keyword id="KW-0648">Protein biosynthesis</keyword>
<keyword id="KW-1185">Reference proteome</keyword>
<keyword id="KW-0694">RNA-binding</keyword>
<keyword id="KW-0820">tRNA-binding</keyword>
<gene>
    <name evidence="1" type="primary">pheT</name>
    <name type="ordered locus">OB2130</name>
</gene>
<protein>
    <recommendedName>
        <fullName evidence="1">Phenylalanine--tRNA ligase beta subunit</fullName>
        <ecNumber evidence="1">6.1.1.20</ecNumber>
    </recommendedName>
    <alternativeName>
        <fullName evidence="1">Phenylalanyl-tRNA synthetase beta subunit</fullName>
        <shortName evidence="1">PheRS</shortName>
    </alternativeName>
</protein>
<proteinExistence type="inferred from homology"/>
<feature type="chain" id="PRO_0000126922" description="Phenylalanine--tRNA ligase beta subunit">
    <location>
        <begin position="1"/>
        <end position="811"/>
    </location>
</feature>
<feature type="domain" description="tRNA-binding" evidence="1">
    <location>
        <begin position="40"/>
        <end position="156"/>
    </location>
</feature>
<feature type="domain" description="B5" evidence="1">
    <location>
        <begin position="411"/>
        <end position="486"/>
    </location>
</feature>
<feature type="domain" description="FDX-ACB" evidence="1">
    <location>
        <begin position="717"/>
        <end position="810"/>
    </location>
</feature>
<feature type="binding site" evidence="1">
    <location>
        <position position="464"/>
    </location>
    <ligand>
        <name>Mg(2+)</name>
        <dbReference type="ChEBI" id="CHEBI:18420"/>
        <note>shared with alpha subunit</note>
    </ligand>
</feature>
<feature type="binding site" evidence="1">
    <location>
        <position position="470"/>
    </location>
    <ligand>
        <name>Mg(2+)</name>
        <dbReference type="ChEBI" id="CHEBI:18420"/>
        <note>shared with alpha subunit</note>
    </ligand>
</feature>
<feature type="binding site" evidence="1">
    <location>
        <position position="473"/>
    </location>
    <ligand>
        <name>Mg(2+)</name>
        <dbReference type="ChEBI" id="CHEBI:18420"/>
        <note>shared with alpha subunit</note>
    </ligand>
</feature>
<feature type="binding site" evidence="1">
    <location>
        <position position="474"/>
    </location>
    <ligand>
        <name>Mg(2+)</name>
        <dbReference type="ChEBI" id="CHEBI:18420"/>
        <note>shared with alpha subunit</note>
    </ligand>
</feature>
<reference key="1">
    <citation type="journal article" date="2002" name="Nucleic Acids Res.">
        <title>Genome sequence of Oceanobacillus iheyensis isolated from the Iheya Ridge and its unexpected adaptive capabilities to extreme environments.</title>
        <authorList>
            <person name="Takami H."/>
            <person name="Takaki Y."/>
            <person name="Uchiyama I."/>
        </authorList>
    </citation>
    <scope>NUCLEOTIDE SEQUENCE [LARGE SCALE GENOMIC DNA]</scope>
    <source>
        <strain>DSM 14371 / CIP 107618 / JCM 11309 / KCTC 3954 / HTE831</strain>
    </source>
</reference>
<organism>
    <name type="scientific">Oceanobacillus iheyensis (strain DSM 14371 / CIP 107618 / JCM 11309 / KCTC 3954 / HTE831)</name>
    <dbReference type="NCBI Taxonomy" id="221109"/>
    <lineage>
        <taxon>Bacteria</taxon>
        <taxon>Bacillati</taxon>
        <taxon>Bacillota</taxon>
        <taxon>Bacilli</taxon>
        <taxon>Bacillales</taxon>
        <taxon>Bacillaceae</taxon>
        <taxon>Oceanobacillus</taxon>
    </lineage>
</organism>
<dbReference type="EC" id="6.1.1.20" evidence="1"/>
<dbReference type="EMBL" id="BA000028">
    <property type="protein sequence ID" value="BAC14086.1"/>
    <property type="molecule type" value="Genomic_DNA"/>
</dbReference>
<dbReference type="RefSeq" id="WP_011066524.1">
    <property type="nucleotide sequence ID" value="NC_004193.1"/>
</dbReference>
<dbReference type="SMR" id="Q8EPH5"/>
<dbReference type="STRING" id="221109.gene:10734378"/>
<dbReference type="KEGG" id="oih:OB2130"/>
<dbReference type="eggNOG" id="COG0072">
    <property type="taxonomic scope" value="Bacteria"/>
</dbReference>
<dbReference type="eggNOG" id="COG0073">
    <property type="taxonomic scope" value="Bacteria"/>
</dbReference>
<dbReference type="HOGENOM" id="CLU_016891_0_0_9"/>
<dbReference type="OrthoDB" id="9805455at2"/>
<dbReference type="PhylomeDB" id="Q8EPH5"/>
<dbReference type="Proteomes" id="UP000000822">
    <property type="component" value="Chromosome"/>
</dbReference>
<dbReference type="GO" id="GO:0009328">
    <property type="term" value="C:phenylalanine-tRNA ligase complex"/>
    <property type="evidence" value="ECO:0007669"/>
    <property type="project" value="TreeGrafter"/>
</dbReference>
<dbReference type="GO" id="GO:0005524">
    <property type="term" value="F:ATP binding"/>
    <property type="evidence" value="ECO:0007669"/>
    <property type="project" value="UniProtKB-UniRule"/>
</dbReference>
<dbReference type="GO" id="GO:0140096">
    <property type="term" value="F:catalytic activity, acting on a protein"/>
    <property type="evidence" value="ECO:0007669"/>
    <property type="project" value="UniProtKB-ARBA"/>
</dbReference>
<dbReference type="GO" id="GO:0000287">
    <property type="term" value="F:magnesium ion binding"/>
    <property type="evidence" value="ECO:0007669"/>
    <property type="project" value="UniProtKB-UniRule"/>
</dbReference>
<dbReference type="GO" id="GO:0004826">
    <property type="term" value="F:phenylalanine-tRNA ligase activity"/>
    <property type="evidence" value="ECO:0007669"/>
    <property type="project" value="UniProtKB-UniRule"/>
</dbReference>
<dbReference type="GO" id="GO:0016740">
    <property type="term" value="F:transferase activity"/>
    <property type="evidence" value="ECO:0007669"/>
    <property type="project" value="UniProtKB-ARBA"/>
</dbReference>
<dbReference type="GO" id="GO:0000049">
    <property type="term" value="F:tRNA binding"/>
    <property type="evidence" value="ECO:0007669"/>
    <property type="project" value="UniProtKB-KW"/>
</dbReference>
<dbReference type="GO" id="GO:0006432">
    <property type="term" value="P:phenylalanyl-tRNA aminoacylation"/>
    <property type="evidence" value="ECO:0007669"/>
    <property type="project" value="UniProtKB-UniRule"/>
</dbReference>
<dbReference type="CDD" id="cd00769">
    <property type="entry name" value="PheRS_beta_core"/>
    <property type="match status" value="1"/>
</dbReference>
<dbReference type="CDD" id="cd02796">
    <property type="entry name" value="tRNA_bind_bactPheRS"/>
    <property type="match status" value="1"/>
</dbReference>
<dbReference type="FunFam" id="2.40.50.140:FF:000045">
    <property type="entry name" value="Phenylalanine--tRNA ligase beta subunit"/>
    <property type="match status" value="1"/>
</dbReference>
<dbReference type="FunFam" id="3.30.70.380:FF:000001">
    <property type="entry name" value="Phenylalanine--tRNA ligase beta subunit"/>
    <property type="match status" value="1"/>
</dbReference>
<dbReference type="FunFam" id="3.30.930.10:FF:000022">
    <property type="entry name" value="Phenylalanine--tRNA ligase beta subunit"/>
    <property type="match status" value="1"/>
</dbReference>
<dbReference type="FunFam" id="3.50.40.10:FF:000001">
    <property type="entry name" value="Phenylalanine--tRNA ligase beta subunit"/>
    <property type="match status" value="1"/>
</dbReference>
<dbReference type="Gene3D" id="3.30.56.10">
    <property type="match status" value="2"/>
</dbReference>
<dbReference type="Gene3D" id="3.30.930.10">
    <property type="entry name" value="Bira Bifunctional Protein, Domain 2"/>
    <property type="match status" value="1"/>
</dbReference>
<dbReference type="Gene3D" id="3.30.70.380">
    <property type="entry name" value="Ferrodoxin-fold anticodon-binding domain"/>
    <property type="match status" value="1"/>
</dbReference>
<dbReference type="Gene3D" id="2.40.50.140">
    <property type="entry name" value="Nucleic acid-binding proteins"/>
    <property type="match status" value="1"/>
</dbReference>
<dbReference type="Gene3D" id="3.50.40.10">
    <property type="entry name" value="Phenylalanyl-trna Synthetase, Chain B, domain 3"/>
    <property type="match status" value="1"/>
</dbReference>
<dbReference type="HAMAP" id="MF_00283">
    <property type="entry name" value="Phe_tRNA_synth_beta1"/>
    <property type="match status" value="1"/>
</dbReference>
<dbReference type="InterPro" id="IPR045864">
    <property type="entry name" value="aa-tRNA-synth_II/BPL/LPL"/>
</dbReference>
<dbReference type="InterPro" id="IPR005146">
    <property type="entry name" value="B3/B4_tRNA-bd"/>
</dbReference>
<dbReference type="InterPro" id="IPR009061">
    <property type="entry name" value="DNA-bd_dom_put_sf"/>
</dbReference>
<dbReference type="InterPro" id="IPR005121">
    <property type="entry name" value="Fdx_antiC-bd"/>
</dbReference>
<dbReference type="InterPro" id="IPR036690">
    <property type="entry name" value="Fdx_antiC-bd_sf"/>
</dbReference>
<dbReference type="InterPro" id="IPR012340">
    <property type="entry name" value="NA-bd_OB-fold"/>
</dbReference>
<dbReference type="InterPro" id="IPR045060">
    <property type="entry name" value="Phe-tRNA-ligase_IIc_bsu"/>
</dbReference>
<dbReference type="InterPro" id="IPR004532">
    <property type="entry name" value="Phe-tRNA-ligase_IIc_bsu_bact"/>
</dbReference>
<dbReference type="InterPro" id="IPR020825">
    <property type="entry name" value="Phe-tRNA_synthase-like_B3/B4"/>
</dbReference>
<dbReference type="InterPro" id="IPR041616">
    <property type="entry name" value="PheRS_beta_core"/>
</dbReference>
<dbReference type="InterPro" id="IPR002547">
    <property type="entry name" value="tRNA-bd_dom"/>
</dbReference>
<dbReference type="InterPro" id="IPR033714">
    <property type="entry name" value="tRNA_bind_bactPheRS"/>
</dbReference>
<dbReference type="InterPro" id="IPR005147">
    <property type="entry name" value="tRNA_synthase_B5-dom"/>
</dbReference>
<dbReference type="NCBIfam" id="TIGR00472">
    <property type="entry name" value="pheT_bact"/>
    <property type="match status" value="1"/>
</dbReference>
<dbReference type="NCBIfam" id="NF045760">
    <property type="entry name" value="YtpR"/>
    <property type="match status" value="1"/>
</dbReference>
<dbReference type="PANTHER" id="PTHR10947:SF0">
    <property type="entry name" value="PHENYLALANINE--TRNA LIGASE BETA SUBUNIT"/>
    <property type="match status" value="1"/>
</dbReference>
<dbReference type="PANTHER" id="PTHR10947">
    <property type="entry name" value="PHENYLALANYL-TRNA SYNTHETASE BETA CHAIN AND LEUCINE-RICH REPEAT-CONTAINING PROTEIN 47"/>
    <property type="match status" value="1"/>
</dbReference>
<dbReference type="Pfam" id="PF03483">
    <property type="entry name" value="B3_4"/>
    <property type="match status" value="1"/>
</dbReference>
<dbReference type="Pfam" id="PF03484">
    <property type="entry name" value="B5"/>
    <property type="match status" value="1"/>
</dbReference>
<dbReference type="Pfam" id="PF03147">
    <property type="entry name" value="FDX-ACB"/>
    <property type="match status" value="1"/>
</dbReference>
<dbReference type="Pfam" id="PF01588">
    <property type="entry name" value="tRNA_bind"/>
    <property type="match status" value="1"/>
</dbReference>
<dbReference type="Pfam" id="PF17759">
    <property type="entry name" value="tRNA_synthFbeta"/>
    <property type="match status" value="1"/>
</dbReference>
<dbReference type="SMART" id="SM00873">
    <property type="entry name" value="B3_4"/>
    <property type="match status" value="1"/>
</dbReference>
<dbReference type="SMART" id="SM00874">
    <property type="entry name" value="B5"/>
    <property type="match status" value="1"/>
</dbReference>
<dbReference type="SMART" id="SM00896">
    <property type="entry name" value="FDX-ACB"/>
    <property type="match status" value="1"/>
</dbReference>
<dbReference type="SUPFAM" id="SSF54991">
    <property type="entry name" value="Anticodon-binding domain of PheRS"/>
    <property type="match status" value="1"/>
</dbReference>
<dbReference type="SUPFAM" id="SSF55681">
    <property type="entry name" value="Class II aaRS and biotin synthetases"/>
    <property type="match status" value="1"/>
</dbReference>
<dbReference type="SUPFAM" id="SSF50249">
    <property type="entry name" value="Nucleic acid-binding proteins"/>
    <property type="match status" value="1"/>
</dbReference>
<dbReference type="SUPFAM" id="SSF56037">
    <property type="entry name" value="PheT/TilS domain"/>
    <property type="match status" value="1"/>
</dbReference>
<dbReference type="SUPFAM" id="SSF46955">
    <property type="entry name" value="Putative DNA-binding domain"/>
    <property type="match status" value="1"/>
</dbReference>
<dbReference type="PROSITE" id="PS51483">
    <property type="entry name" value="B5"/>
    <property type="match status" value="1"/>
</dbReference>
<dbReference type="PROSITE" id="PS51447">
    <property type="entry name" value="FDX_ACB"/>
    <property type="match status" value="1"/>
</dbReference>
<dbReference type="PROSITE" id="PS50886">
    <property type="entry name" value="TRBD"/>
    <property type="match status" value="1"/>
</dbReference>
<sequence length="811" mass="91728">MLVSYNWLKNYVNLDAVTPEELAAKITKSGIEVEGVEYIAEKNENIVVGYVETCEKHPDADKLNVTQVSVGEETLQIVCGAPNIAKGQKVAVAKPGAVLPGNMKIKKVKLRGVESNGMICSLQELGLEEKYIPTDIAEGIFVFPEDEDIEVGSKVDEWLNLTDAVLDLDVLANRPDALSMLGVAYEVAAVLDQPIELPTKNIDYIDEKVSDQIEINIESKDLNPYYAAFMVKDVVIKPSPLWMRNYLMASGIRPINNIVDITNYVLLEYGQPLHAFDFDRFASNQIVIRRGVEGEVIQTLDEQERKLTEDNLVITNGSEPVALAGVMGGANSEVTDKTVNVLLEAAYFEATAVRHTVRQTGLRSESSTRFEKGIDPNRIVEAGLRACQLMQRYAGGKVLQGFAEENHLDTKSTKEVKVPLTQVNQRLGMELTEKDVQSVLNRLKFDFDQDGHTFIVHVPTRRRDITIFEDMLEEIIRIHGYDHLPYTIPQGWVKSGGLTDKQLLQRKIREFMMSSGAMETLTYSLTNEQNVKRLVTPNIDLENSYPISLAMPMSEDHKYLRLSIVPELLRILQHNIARKQTDLNYFEIGKVFISEEQELTHQPTEKLHLAGAFTGLWHNHPWQQDKKQVDFFVVKGIIEGLFNYLQLNISFKQVKMKDMHPGRCAELNIDGENIGFMGQLHPKTANVFDLPETYVFEIDLESVFEKYINVPSFTDIPRYPSVSRDIAFILDTEVFSGEVQQYIQEIGAPLVKEVSIFDVYQGEHLEDGKKSVAYRLMYQDPAKTLQDDEVESSYQQIVEAVNKKFGSYVRS</sequence>
<name>SYFB_OCEIH</name>
<accession>Q8EPH5</accession>
<comment type="catalytic activity">
    <reaction evidence="1">
        <text>tRNA(Phe) + L-phenylalanine + ATP = L-phenylalanyl-tRNA(Phe) + AMP + diphosphate + H(+)</text>
        <dbReference type="Rhea" id="RHEA:19413"/>
        <dbReference type="Rhea" id="RHEA-COMP:9668"/>
        <dbReference type="Rhea" id="RHEA-COMP:9699"/>
        <dbReference type="ChEBI" id="CHEBI:15378"/>
        <dbReference type="ChEBI" id="CHEBI:30616"/>
        <dbReference type="ChEBI" id="CHEBI:33019"/>
        <dbReference type="ChEBI" id="CHEBI:58095"/>
        <dbReference type="ChEBI" id="CHEBI:78442"/>
        <dbReference type="ChEBI" id="CHEBI:78531"/>
        <dbReference type="ChEBI" id="CHEBI:456215"/>
        <dbReference type="EC" id="6.1.1.20"/>
    </reaction>
</comment>
<comment type="cofactor">
    <cofactor evidence="1">
        <name>Mg(2+)</name>
        <dbReference type="ChEBI" id="CHEBI:18420"/>
    </cofactor>
    <text evidence="1">Binds 2 magnesium ions per tetramer.</text>
</comment>
<comment type="subunit">
    <text evidence="1">Tetramer of two alpha and two beta subunits.</text>
</comment>
<comment type="subcellular location">
    <subcellularLocation>
        <location evidence="1">Cytoplasm</location>
    </subcellularLocation>
</comment>
<comment type="similarity">
    <text evidence="1">Belongs to the phenylalanyl-tRNA synthetase beta subunit family. Type 1 subfamily.</text>
</comment>
<evidence type="ECO:0000255" key="1">
    <source>
        <dbReference type="HAMAP-Rule" id="MF_00283"/>
    </source>
</evidence>